<dbReference type="EC" id="4.4.1.13"/>
<dbReference type="EMBL" id="AL583923">
    <property type="protein sequence ID" value="CAC30747.1"/>
    <property type="molecule type" value="Genomic_DNA"/>
</dbReference>
<dbReference type="PIR" id="C87133">
    <property type="entry name" value="C87133"/>
</dbReference>
<dbReference type="RefSeq" id="NP_302217.1">
    <property type="nucleotide sequence ID" value="NC_002677.1"/>
</dbReference>
<dbReference type="RefSeq" id="WP_010908538.1">
    <property type="nucleotide sequence ID" value="NC_002677.1"/>
</dbReference>
<dbReference type="SMR" id="Q9CBM9"/>
<dbReference type="STRING" id="272631.gene:17575641"/>
<dbReference type="KEGG" id="mle:ML1794"/>
<dbReference type="PATRIC" id="fig|272631.5.peg.3415"/>
<dbReference type="Leproma" id="ML1794"/>
<dbReference type="eggNOG" id="COG1168">
    <property type="taxonomic scope" value="Bacteria"/>
</dbReference>
<dbReference type="HOGENOM" id="CLU_017584_15_2_11"/>
<dbReference type="OrthoDB" id="3224382at2"/>
<dbReference type="UniPathway" id="UPA00051">
    <property type="reaction ID" value="UER00078"/>
</dbReference>
<dbReference type="Proteomes" id="UP000000806">
    <property type="component" value="Chromosome"/>
</dbReference>
<dbReference type="GO" id="GO:0047804">
    <property type="term" value="F:cysteine-S-conjugate beta-lyase activity"/>
    <property type="evidence" value="ECO:0007669"/>
    <property type="project" value="UniProtKB-EC"/>
</dbReference>
<dbReference type="GO" id="GO:0030170">
    <property type="term" value="F:pyridoxal phosphate binding"/>
    <property type="evidence" value="ECO:0007669"/>
    <property type="project" value="InterPro"/>
</dbReference>
<dbReference type="GO" id="GO:0009086">
    <property type="term" value="P:methionine biosynthetic process"/>
    <property type="evidence" value="ECO:0007669"/>
    <property type="project" value="UniProtKB-KW"/>
</dbReference>
<dbReference type="CDD" id="cd00609">
    <property type="entry name" value="AAT_like"/>
    <property type="match status" value="1"/>
</dbReference>
<dbReference type="Gene3D" id="3.90.1150.10">
    <property type="entry name" value="Aspartate Aminotransferase, domain 1"/>
    <property type="match status" value="1"/>
</dbReference>
<dbReference type="Gene3D" id="3.40.640.10">
    <property type="entry name" value="Type I PLP-dependent aspartate aminotransferase-like (Major domain)"/>
    <property type="match status" value="1"/>
</dbReference>
<dbReference type="InterPro" id="IPR004839">
    <property type="entry name" value="Aminotransferase_I/II_large"/>
</dbReference>
<dbReference type="InterPro" id="IPR051798">
    <property type="entry name" value="Class-II_PLP-Dep_Aminotrans"/>
</dbReference>
<dbReference type="InterPro" id="IPR015424">
    <property type="entry name" value="PyrdxlP-dep_Trfase"/>
</dbReference>
<dbReference type="InterPro" id="IPR015421">
    <property type="entry name" value="PyrdxlP-dep_Trfase_major"/>
</dbReference>
<dbReference type="InterPro" id="IPR015422">
    <property type="entry name" value="PyrdxlP-dep_Trfase_small"/>
</dbReference>
<dbReference type="PANTHER" id="PTHR43525:SF2">
    <property type="entry name" value="CYSTATHIONINE BETA-LYASE-RELATED"/>
    <property type="match status" value="1"/>
</dbReference>
<dbReference type="PANTHER" id="PTHR43525">
    <property type="entry name" value="PROTEIN MALY"/>
    <property type="match status" value="1"/>
</dbReference>
<dbReference type="Pfam" id="PF00155">
    <property type="entry name" value="Aminotran_1_2"/>
    <property type="match status" value="1"/>
</dbReference>
<dbReference type="SUPFAM" id="SSF53383">
    <property type="entry name" value="PLP-dependent transferases"/>
    <property type="match status" value="1"/>
</dbReference>
<sequence>MTSNPLEQLTIEQLQCRTSMKWRAHPEDVLPLWVAEMDVLLAPTVAEAVHRAVDNGDTGYPYGTTFAEAISEFASQRWQWHDLDVSRTAIVPDVMLGVVEMLRLITDRGDGVIVSPPVYPPFYAFVTHDGRRVLEAPLGRDGRLDLAALQDAFSRARRSSGPNGKVAYLLCNPHNPTGSVHTVAELHGVAELARRFGVRVISDEIHAPLVLSGARFTPYLSIPGAENAFALMSATKGWNLCGLKAAIAIAGREAAADLRRIPKEVSHGPSHLGIIAHTAAFRTGSSWLDALLQGLEANRALLRDLVTKHLPGVRYQRPQGTYLTWLDCRHLGFDEQINEGLAAISDLSGPARWFLDHSRVALTSGHAFGTGGVGHVRVNFATSQAILIEALSRMGRALVNFR</sequence>
<accession>Q9CBM9</accession>
<gene>
    <name type="ordered locus">ML1794</name>
</gene>
<organism>
    <name type="scientific">Mycobacterium leprae (strain TN)</name>
    <dbReference type="NCBI Taxonomy" id="272631"/>
    <lineage>
        <taxon>Bacteria</taxon>
        <taxon>Bacillati</taxon>
        <taxon>Actinomycetota</taxon>
        <taxon>Actinomycetes</taxon>
        <taxon>Mycobacteriales</taxon>
        <taxon>Mycobacteriaceae</taxon>
        <taxon>Mycobacterium</taxon>
    </lineage>
</organism>
<name>CBL_MYCLE</name>
<proteinExistence type="inferred from homology"/>
<comment type="catalytic activity">
    <reaction>
        <text>L,L-cystathionine + H2O = L-homocysteine + pyruvate + NH4(+)</text>
        <dbReference type="Rhea" id="RHEA:13965"/>
        <dbReference type="ChEBI" id="CHEBI:15361"/>
        <dbReference type="ChEBI" id="CHEBI:15377"/>
        <dbReference type="ChEBI" id="CHEBI:28938"/>
        <dbReference type="ChEBI" id="CHEBI:58161"/>
        <dbReference type="ChEBI" id="CHEBI:58199"/>
    </reaction>
</comment>
<comment type="catalytic activity">
    <reaction>
        <text>an S-substituted L-cysteine + H2O = a thiol + pyruvate + NH4(+)</text>
        <dbReference type="Rhea" id="RHEA:18121"/>
        <dbReference type="ChEBI" id="CHEBI:15361"/>
        <dbReference type="ChEBI" id="CHEBI:15377"/>
        <dbReference type="ChEBI" id="CHEBI:28938"/>
        <dbReference type="ChEBI" id="CHEBI:29256"/>
        <dbReference type="ChEBI" id="CHEBI:58717"/>
        <dbReference type="EC" id="4.4.1.13"/>
    </reaction>
</comment>
<comment type="cofactor">
    <cofactor evidence="1">
        <name>pyridoxal 5'-phosphate</name>
        <dbReference type="ChEBI" id="CHEBI:597326"/>
    </cofactor>
</comment>
<comment type="pathway">
    <text>Amino-acid biosynthesis; L-methionine biosynthesis via de novo pathway; L-homocysteine from L-cystathionine: step 1/1.</text>
</comment>
<comment type="similarity">
    <text evidence="2">Belongs to the class-II pyridoxal-phosphate-dependent aminotransferase family. MalY/PatB cystathionine beta-lyase subfamily.</text>
</comment>
<feature type="chain" id="PRO_0000163849" description="Putative cystathionine beta-lyase">
    <location>
        <begin position="1"/>
        <end position="402"/>
    </location>
</feature>
<feature type="modified residue" description="N6-(pyridoxal phosphate)lysine" evidence="1">
    <location>
        <position position="236"/>
    </location>
</feature>
<keyword id="KW-0028">Amino-acid biosynthesis</keyword>
<keyword id="KW-0456">Lyase</keyword>
<keyword id="KW-0486">Methionine biosynthesis</keyword>
<keyword id="KW-0663">Pyridoxal phosphate</keyword>
<keyword id="KW-1185">Reference proteome</keyword>
<reference key="1">
    <citation type="journal article" date="2001" name="Nature">
        <title>Massive gene decay in the leprosy bacillus.</title>
        <authorList>
            <person name="Cole S.T."/>
            <person name="Eiglmeier K."/>
            <person name="Parkhill J."/>
            <person name="James K.D."/>
            <person name="Thomson N.R."/>
            <person name="Wheeler P.R."/>
            <person name="Honore N."/>
            <person name="Garnier T."/>
            <person name="Churcher C.M."/>
            <person name="Harris D.E."/>
            <person name="Mungall K.L."/>
            <person name="Basham D."/>
            <person name="Brown D."/>
            <person name="Chillingworth T."/>
            <person name="Connor R."/>
            <person name="Davies R.M."/>
            <person name="Devlin K."/>
            <person name="Duthoy S."/>
            <person name="Feltwell T."/>
            <person name="Fraser A."/>
            <person name="Hamlin N."/>
            <person name="Holroyd S."/>
            <person name="Hornsby T."/>
            <person name="Jagels K."/>
            <person name="Lacroix C."/>
            <person name="Maclean J."/>
            <person name="Moule S."/>
            <person name="Murphy L.D."/>
            <person name="Oliver K."/>
            <person name="Quail M.A."/>
            <person name="Rajandream M.A."/>
            <person name="Rutherford K.M."/>
            <person name="Rutter S."/>
            <person name="Seeger K."/>
            <person name="Simon S."/>
            <person name="Simmonds M."/>
            <person name="Skelton J."/>
            <person name="Squares R."/>
            <person name="Squares S."/>
            <person name="Stevens K."/>
            <person name="Taylor K."/>
            <person name="Whitehead S."/>
            <person name="Woodward J.R."/>
            <person name="Barrell B.G."/>
        </authorList>
    </citation>
    <scope>NUCLEOTIDE SEQUENCE [LARGE SCALE GENOMIC DNA]</scope>
    <source>
        <strain>TN</strain>
    </source>
</reference>
<evidence type="ECO:0000250" key="1"/>
<evidence type="ECO:0000305" key="2"/>
<protein>
    <recommendedName>
        <fullName>Putative cystathionine beta-lyase</fullName>
        <shortName>CBL</shortName>
        <ecNumber>4.4.1.13</ecNumber>
    </recommendedName>
    <alternativeName>
        <fullName>Beta-cystathionase</fullName>
    </alternativeName>
    <alternativeName>
        <fullName>Cysteine lyase</fullName>
    </alternativeName>
    <alternativeName>
        <fullName>Cysteine-S-conjugate beta-lyase</fullName>
    </alternativeName>
</protein>